<dbReference type="EC" id="1.-.-.-" evidence="1"/>
<dbReference type="EMBL" id="AL591985">
    <property type="protein sequence ID" value="CAC48819.1"/>
    <property type="molecule type" value="Genomic_DNA"/>
</dbReference>
<dbReference type="PIR" id="C95894">
    <property type="entry name" value="C95894"/>
</dbReference>
<dbReference type="RefSeq" id="NP_436959.1">
    <property type="nucleotide sequence ID" value="NC_003078.1"/>
</dbReference>
<dbReference type="RefSeq" id="WP_010975301.1">
    <property type="nucleotide sequence ID" value="NC_003078.1"/>
</dbReference>
<dbReference type="SMR" id="P58338"/>
<dbReference type="EnsemblBacteria" id="CAC48819">
    <property type="protein sequence ID" value="CAC48819"/>
    <property type="gene ID" value="SM_b20433"/>
</dbReference>
<dbReference type="KEGG" id="sme:SM_b20433"/>
<dbReference type="PATRIC" id="fig|266834.11.peg.5349"/>
<dbReference type="eggNOG" id="COG2423">
    <property type="taxonomic scope" value="Bacteria"/>
</dbReference>
<dbReference type="HOGENOM" id="CLU_042088_2_0_5"/>
<dbReference type="OrthoDB" id="9809203at2"/>
<dbReference type="Proteomes" id="UP000001976">
    <property type="component" value="Plasmid pSymB"/>
</dbReference>
<dbReference type="GO" id="GO:0005737">
    <property type="term" value="C:cytoplasm"/>
    <property type="evidence" value="ECO:0007669"/>
    <property type="project" value="TreeGrafter"/>
</dbReference>
<dbReference type="GO" id="GO:0016491">
    <property type="term" value="F:oxidoreductase activity"/>
    <property type="evidence" value="ECO:0007669"/>
    <property type="project" value="UniProtKB-KW"/>
</dbReference>
<dbReference type="FunFam" id="3.40.50.720:FF:000311">
    <property type="entry name" value="Ornithine cyclodeaminase"/>
    <property type="match status" value="1"/>
</dbReference>
<dbReference type="Gene3D" id="3.40.50.720">
    <property type="entry name" value="NAD(P)-binding Rossmann-like Domain"/>
    <property type="match status" value="1"/>
</dbReference>
<dbReference type="Gene3D" id="3.30.1780.10">
    <property type="entry name" value="ornithine cyclodeaminase, domain 1"/>
    <property type="match status" value="1"/>
</dbReference>
<dbReference type="InterPro" id="IPR014334">
    <property type="entry name" value="Ectoine_EutC"/>
</dbReference>
<dbReference type="InterPro" id="IPR036291">
    <property type="entry name" value="NAD(P)-bd_dom_sf"/>
</dbReference>
<dbReference type="InterPro" id="IPR003462">
    <property type="entry name" value="ODC_Mu_crystall"/>
</dbReference>
<dbReference type="InterPro" id="IPR023401">
    <property type="entry name" value="ODC_N"/>
</dbReference>
<dbReference type="NCBIfam" id="TIGR02992">
    <property type="entry name" value="ectoine_eutC"/>
    <property type="match status" value="1"/>
</dbReference>
<dbReference type="NCBIfam" id="NF006141">
    <property type="entry name" value="PRK08291.1"/>
    <property type="match status" value="1"/>
</dbReference>
<dbReference type="PANTHER" id="PTHR13812">
    <property type="entry name" value="KETIMINE REDUCTASE MU-CRYSTALLIN"/>
    <property type="match status" value="1"/>
</dbReference>
<dbReference type="PANTHER" id="PTHR13812:SF19">
    <property type="entry name" value="KETIMINE REDUCTASE MU-CRYSTALLIN"/>
    <property type="match status" value="1"/>
</dbReference>
<dbReference type="Pfam" id="PF02423">
    <property type="entry name" value="OCD_Mu_crystall"/>
    <property type="match status" value="1"/>
</dbReference>
<dbReference type="PIRSF" id="PIRSF001439">
    <property type="entry name" value="CryM"/>
    <property type="match status" value="1"/>
</dbReference>
<dbReference type="SUPFAM" id="SSF51735">
    <property type="entry name" value="NAD(P)-binding Rossmann-fold domains"/>
    <property type="match status" value="1"/>
</dbReference>
<name>Y0419_RHIME</name>
<keyword id="KW-0520">NAD</keyword>
<keyword id="KW-0560">Oxidoreductase</keyword>
<keyword id="KW-0614">Plasmid</keyword>
<keyword id="KW-1185">Reference proteome</keyword>
<gene>
    <name evidence="2" type="primary">eutC</name>
    <name type="ordered locus">RB0419</name>
    <name type="ORF">SMb20433</name>
</gene>
<protein>
    <recommendedName>
        <fullName evidence="1">Putative dehydrogenase RB0419</fullName>
        <ecNumber evidence="1">1.-.-.-</ecNumber>
    </recommendedName>
</protein>
<geneLocation type="plasmid">
    <name>pSymB</name>
    <name>megaplasmid 2</name>
</geneLocation>
<accession>P58338</accession>
<reference key="1">
    <citation type="journal article" date="2001" name="Proc. Natl. Acad. Sci. U.S.A.">
        <title>The complete sequence of the 1,683-kb pSymB megaplasmid from the N2-fixing endosymbiont Sinorhizobium meliloti.</title>
        <authorList>
            <person name="Finan T.M."/>
            <person name="Weidner S."/>
            <person name="Wong K."/>
            <person name="Buhrmester J."/>
            <person name="Chain P."/>
            <person name="Vorhoelter F.J."/>
            <person name="Hernandez-Lucas I."/>
            <person name="Becker A."/>
            <person name="Cowie A."/>
            <person name="Gouzy J."/>
            <person name="Golding B."/>
            <person name="Puehler A."/>
        </authorList>
    </citation>
    <scope>NUCLEOTIDE SEQUENCE [LARGE SCALE GENOMIC DNA]</scope>
    <source>
        <strain>1021</strain>
    </source>
</reference>
<reference key="2">
    <citation type="journal article" date="2001" name="Science">
        <title>The composite genome of the legume symbiont Sinorhizobium meliloti.</title>
        <authorList>
            <person name="Galibert F."/>
            <person name="Finan T.M."/>
            <person name="Long S.R."/>
            <person name="Puehler A."/>
            <person name="Abola P."/>
            <person name="Ampe F."/>
            <person name="Barloy-Hubler F."/>
            <person name="Barnett M.J."/>
            <person name="Becker A."/>
            <person name="Boistard P."/>
            <person name="Bothe G."/>
            <person name="Boutry M."/>
            <person name="Bowser L."/>
            <person name="Buhrmester J."/>
            <person name="Cadieu E."/>
            <person name="Capela D."/>
            <person name="Chain P."/>
            <person name="Cowie A."/>
            <person name="Davis R.W."/>
            <person name="Dreano S."/>
            <person name="Federspiel N.A."/>
            <person name="Fisher R.F."/>
            <person name="Gloux S."/>
            <person name="Godrie T."/>
            <person name="Goffeau A."/>
            <person name="Golding B."/>
            <person name="Gouzy J."/>
            <person name="Gurjal M."/>
            <person name="Hernandez-Lucas I."/>
            <person name="Hong A."/>
            <person name="Huizar L."/>
            <person name="Hyman R.W."/>
            <person name="Jones T."/>
            <person name="Kahn D."/>
            <person name="Kahn M.L."/>
            <person name="Kalman S."/>
            <person name="Keating D.H."/>
            <person name="Kiss E."/>
            <person name="Komp C."/>
            <person name="Lelaure V."/>
            <person name="Masuy D."/>
            <person name="Palm C."/>
            <person name="Peck M.C."/>
            <person name="Pohl T.M."/>
            <person name="Portetelle D."/>
            <person name="Purnelle B."/>
            <person name="Ramsperger U."/>
            <person name="Surzycki R."/>
            <person name="Thebault P."/>
            <person name="Vandenbol M."/>
            <person name="Vorhoelter F.J."/>
            <person name="Weidner S."/>
            <person name="Wells D.H."/>
            <person name="Wong K."/>
            <person name="Yeh K.-C."/>
            <person name="Batut J."/>
        </authorList>
    </citation>
    <scope>NUCLEOTIDE SEQUENCE [LARGE SCALE GENOMIC DNA]</scope>
    <source>
        <strain>1021</strain>
    </source>
</reference>
<sequence>MTRMKILTEAELRGIVPLDREAVACVEDAFRALATKAVAMPPILRLDIPEHRGEVDVKTAYVPGLDGFAIKISPGFFDNPKIGLPSTNGMMVLLSSKTGLVQALLLDNGYLTDVRTAAAGAVAARRLSREDSSVAAVFGAGMQARLQLEALALVRPIREARIWARDAAKAEAAAIALGGKLGFAVKAETDPRAAITGADIIVTTTPSETPVLKAEWLEPGQHVTAMGSDAEHKNEIDPHAIARATYVADSLKQTRRLGELHHAIAAHLMSAEAEFPELGQVIAGLKPGRTRADEITIADLTGTGIQDTAIATLAFARANAADAGTTFES</sequence>
<proteinExistence type="inferred from homology"/>
<feature type="chain" id="PRO_0000200674" description="Putative dehydrogenase RB0419">
    <location>
        <begin position="1"/>
        <end position="329"/>
    </location>
</feature>
<comment type="similarity">
    <text evidence="1">Belongs to the ornithine cyclodeaminase/mu-crystallin family.</text>
</comment>
<evidence type="ECO:0000305" key="1"/>
<evidence type="ECO:0000312" key="2">
    <source>
        <dbReference type="EMBL" id="CAC48819.1"/>
    </source>
</evidence>
<organism>
    <name type="scientific">Rhizobium meliloti (strain 1021)</name>
    <name type="common">Ensifer meliloti</name>
    <name type="synonym">Sinorhizobium meliloti</name>
    <dbReference type="NCBI Taxonomy" id="266834"/>
    <lineage>
        <taxon>Bacteria</taxon>
        <taxon>Pseudomonadati</taxon>
        <taxon>Pseudomonadota</taxon>
        <taxon>Alphaproteobacteria</taxon>
        <taxon>Hyphomicrobiales</taxon>
        <taxon>Rhizobiaceae</taxon>
        <taxon>Sinorhizobium/Ensifer group</taxon>
        <taxon>Sinorhizobium</taxon>
    </lineage>
</organism>